<accession>Q97TC4</accession>
<protein>
    <recommendedName>
        <fullName>Hypoxanthine-guanine phosphoribosyltransferase</fullName>
        <shortName>HGPRT</shortName>
        <shortName>HGPRTase</shortName>
        <ecNumber evidence="3">2.4.2.8</ecNumber>
    </recommendedName>
</protein>
<gene>
    <name type="primary">hpt</name>
    <name type="ordered locus">SP_0012</name>
</gene>
<organism>
    <name type="scientific">Streptococcus pneumoniae serotype 4 (strain ATCC BAA-334 / TIGR4)</name>
    <dbReference type="NCBI Taxonomy" id="170187"/>
    <lineage>
        <taxon>Bacteria</taxon>
        <taxon>Bacillati</taxon>
        <taxon>Bacillota</taxon>
        <taxon>Bacilli</taxon>
        <taxon>Lactobacillales</taxon>
        <taxon>Streptococcaceae</taxon>
        <taxon>Streptococcus</taxon>
    </lineage>
</organism>
<keyword id="KW-0963">Cytoplasm</keyword>
<keyword id="KW-0328">Glycosyltransferase</keyword>
<keyword id="KW-0460">Magnesium</keyword>
<keyword id="KW-0479">Metal-binding</keyword>
<keyword id="KW-0547">Nucleotide-binding</keyword>
<keyword id="KW-0660">Purine salvage</keyword>
<keyword id="KW-1185">Reference proteome</keyword>
<keyword id="KW-0808">Transferase</keyword>
<comment type="function">
    <text evidence="3">Purine salvage pathway enzyme that catalyzes the transfer of the ribosyl-5-phosphate group from 5-phospho-alpha-D-ribose 1-diphosphate (PRPP) to the N9 position of the 6-oxopurines hypoxanthine and guanine to form the corresponding ribonucleotides IMP (inosine 5'-monophosphate) and GMP (guanosine 5'-monophosphate), with the release of PPi.</text>
</comment>
<comment type="catalytic activity">
    <reaction evidence="3">
        <text>IMP + diphosphate = hypoxanthine + 5-phospho-alpha-D-ribose 1-diphosphate</text>
        <dbReference type="Rhea" id="RHEA:17973"/>
        <dbReference type="ChEBI" id="CHEBI:17368"/>
        <dbReference type="ChEBI" id="CHEBI:33019"/>
        <dbReference type="ChEBI" id="CHEBI:58017"/>
        <dbReference type="ChEBI" id="CHEBI:58053"/>
        <dbReference type="EC" id="2.4.2.8"/>
    </reaction>
    <physiologicalReaction direction="right-to-left" evidence="3">
        <dbReference type="Rhea" id="RHEA:17975"/>
    </physiologicalReaction>
</comment>
<comment type="catalytic activity">
    <reaction evidence="3">
        <text>GMP + diphosphate = guanine + 5-phospho-alpha-D-ribose 1-diphosphate</text>
        <dbReference type="Rhea" id="RHEA:25424"/>
        <dbReference type="ChEBI" id="CHEBI:16235"/>
        <dbReference type="ChEBI" id="CHEBI:33019"/>
        <dbReference type="ChEBI" id="CHEBI:58017"/>
        <dbReference type="ChEBI" id="CHEBI:58115"/>
        <dbReference type="EC" id="2.4.2.8"/>
    </reaction>
    <physiologicalReaction direction="right-to-left" evidence="3">
        <dbReference type="Rhea" id="RHEA:25426"/>
    </physiologicalReaction>
</comment>
<comment type="cofactor">
    <cofactor evidence="3">
        <name>Mg(2+)</name>
        <dbReference type="ChEBI" id="CHEBI:18420"/>
    </cofactor>
</comment>
<comment type="pathway">
    <text evidence="3">Purine metabolism; IMP biosynthesis via salvage pathway; IMP from hypoxanthine: step 1/1.</text>
</comment>
<comment type="pathway">
    <text evidence="3">Purine metabolism; GMP biosynthesis via salvage pathway; GMP from guanine: step 1/1.</text>
</comment>
<comment type="subcellular location">
    <subcellularLocation>
        <location evidence="1">Cytoplasm</location>
    </subcellularLocation>
</comment>
<comment type="similarity">
    <text evidence="4">Belongs to the purine/pyrimidine phosphoribosyltransferase family.</text>
</comment>
<sequence length="180" mass="20212">MLENDIKKVLVSHDEITEAAKKLGAQLTKDYAGKNPILVGILKGSIPFMAELVKHIDTHIEMDFMMVSSYHGGTASSGVINIKQDVTQDIKGRHVLFVEDIIDTGQTLKNLRDMFKEREAASVKIATLLDKPEGRVVEIEADYTCFTIPNEFVVGYGLDYKENYRNLPYIGVLKEEVYSN</sequence>
<feature type="chain" id="PRO_0000139623" description="Hypoxanthine-guanine phosphoribosyltransferase">
    <location>
        <begin position="1"/>
        <end position="180"/>
    </location>
</feature>
<feature type="active site" description="Proton acceptor" evidence="2">
    <location>
        <position position="103"/>
    </location>
</feature>
<feature type="binding site" evidence="3">
    <location>
        <position position="43"/>
    </location>
    <ligand>
        <name>diphosphate</name>
        <dbReference type="ChEBI" id="CHEBI:33019"/>
    </ligand>
</feature>
<feature type="binding site" evidence="3">
    <location>
        <position position="44"/>
    </location>
    <ligand>
        <name>diphosphate</name>
        <dbReference type="ChEBI" id="CHEBI:33019"/>
    </ligand>
</feature>
<feature type="binding site" evidence="3">
    <location>
        <position position="99"/>
    </location>
    <ligand>
        <name>Mg(2+)</name>
        <dbReference type="ChEBI" id="CHEBI:18420"/>
    </ligand>
</feature>
<feature type="binding site" evidence="3">
    <location>
        <position position="100"/>
    </location>
    <ligand>
        <name>Mg(2+)</name>
        <dbReference type="ChEBI" id="CHEBI:18420"/>
    </ligand>
</feature>
<feature type="binding site" evidence="3">
    <location>
        <position position="131"/>
    </location>
    <ligand>
        <name>GMP</name>
        <dbReference type="ChEBI" id="CHEBI:58115"/>
    </ligand>
</feature>
<feature type="binding site" evidence="3">
    <location>
        <begin position="152"/>
        <end position="153"/>
    </location>
    <ligand>
        <name>GMP</name>
        <dbReference type="ChEBI" id="CHEBI:58115"/>
    </ligand>
</feature>
<feature type="binding site" evidence="3">
    <location>
        <position position="159"/>
    </location>
    <ligand>
        <name>GMP</name>
        <dbReference type="ChEBI" id="CHEBI:58115"/>
    </ligand>
</feature>
<feature type="binding site" evidence="3">
    <location>
        <position position="165"/>
    </location>
    <ligand>
        <name>diphosphate</name>
        <dbReference type="ChEBI" id="CHEBI:33019"/>
    </ligand>
</feature>
<evidence type="ECO:0000250" key="1"/>
<evidence type="ECO:0000250" key="2">
    <source>
        <dbReference type="UniProtKB" id="P0A9M2"/>
    </source>
</evidence>
<evidence type="ECO:0000250" key="3">
    <source>
        <dbReference type="UniProtKB" id="P9WHQ9"/>
    </source>
</evidence>
<evidence type="ECO:0000305" key="4"/>
<reference key="1">
    <citation type="journal article" date="2001" name="Science">
        <title>Complete genome sequence of a virulent isolate of Streptococcus pneumoniae.</title>
        <authorList>
            <person name="Tettelin H."/>
            <person name="Nelson K.E."/>
            <person name="Paulsen I.T."/>
            <person name="Eisen J.A."/>
            <person name="Read T.D."/>
            <person name="Peterson S.N."/>
            <person name="Heidelberg J.F."/>
            <person name="DeBoy R.T."/>
            <person name="Haft D.H."/>
            <person name="Dodson R.J."/>
            <person name="Durkin A.S."/>
            <person name="Gwinn M.L."/>
            <person name="Kolonay J.F."/>
            <person name="Nelson W.C."/>
            <person name="Peterson J.D."/>
            <person name="Umayam L.A."/>
            <person name="White O."/>
            <person name="Salzberg S.L."/>
            <person name="Lewis M.R."/>
            <person name="Radune D."/>
            <person name="Holtzapple E.K."/>
            <person name="Khouri H.M."/>
            <person name="Wolf A.M."/>
            <person name="Utterback T.R."/>
            <person name="Hansen C.L."/>
            <person name="McDonald L.A."/>
            <person name="Feldblyum T.V."/>
            <person name="Angiuoli S.V."/>
            <person name="Dickinson T."/>
            <person name="Hickey E.K."/>
            <person name="Holt I.E."/>
            <person name="Loftus B.J."/>
            <person name="Yang F."/>
            <person name="Smith H.O."/>
            <person name="Venter J.C."/>
            <person name="Dougherty B.A."/>
            <person name="Morrison D.A."/>
            <person name="Hollingshead S.K."/>
            <person name="Fraser C.M."/>
        </authorList>
    </citation>
    <scope>NUCLEOTIDE SEQUENCE [LARGE SCALE GENOMIC DNA]</scope>
    <source>
        <strain>ATCC BAA-334 / TIGR4</strain>
    </source>
</reference>
<name>HGPRT_STRPN</name>
<proteinExistence type="inferred from homology"/>
<dbReference type="EC" id="2.4.2.8" evidence="3"/>
<dbReference type="EMBL" id="AE005672">
    <property type="protein sequence ID" value="AAK74205.1"/>
    <property type="molecule type" value="Genomic_DNA"/>
</dbReference>
<dbReference type="PIR" id="C97873">
    <property type="entry name" value="C97873"/>
</dbReference>
<dbReference type="PIR" id="D95001">
    <property type="entry name" value="D95001"/>
</dbReference>
<dbReference type="RefSeq" id="WP_000892185.1">
    <property type="nucleotide sequence ID" value="NZ_CP155539.1"/>
</dbReference>
<dbReference type="SMR" id="Q97TC4"/>
<dbReference type="PaxDb" id="170187-SP_0012"/>
<dbReference type="EnsemblBacteria" id="AAK74205">
    <property type="protein sequence ID" value="AAK74205"/>
    <property type="gene ID" value="SP_0012"/>
</dbReference>
<dbReference type="KEGG" id="spn:SP_0012"/>
<dbReference type="eggNOG" id="COG0634">
    <property type="taxonomic scope" value="Bacteria"/>
</dbReference>
<dbReference type="PhylomeDB" id="Q97TC4"/>
<dbReference type="BioCyc" id="SPNE170187:G1FZB-11-MONOMER"/>
<dbReference type="UniPathway" id="UPA00591">
    <property type="reaction ID" value="UER00648"/>
</dbReference>
<dbReference type="UniPathway" id="UPA00909">
    <property type="reaction ID" value="UER00887"/>
</dbReference>
<dbReference type="Proteomes" id="UP000000585">
    <property type="component" value="Chromosome"/>
</dbReference>
<dbReference type="GO" id="GO:0005829">
    <property type="term" value="C:cytosol"/>
    <property type="evidence" value="ECO:0007669"/>
    <property type="project" value="TreeGrafter"/>
</dbReference>
<dbReference type="GO" id="GO:0052657">
    <property type="term" value="F:guanine phosphoribosyltransferase activity"/>
    <property type="evidence" value="ECO:0007669"/>
    <property type="project" value="RHEA"/>
</dbReference>
<dbReference type="GO" id="GO:0004422">
    <property type="term" value="F:hypoxanthine phosphoribosyltransferase activity"/>
    <property type="evidence" value="ECO:0007669"/>
    <property type="project" value="InterPro"/>
</dbReference>
<dbReference type="GO" id="GO:0000287">
    <property type="term" value="F:magnesium ion binding"/>
    <property type="evidence" value="ECO:0007669"/>
    <property type="project" value="TreeGrafter"/>
</dbReference>
<dbReference type="GO" id="GO:0000166">
    <property type="term" value="F:nucleotide binding"/>
    <property type="evidence" value="ECO:0007669"/>
    <property type="project" value="UniProtKB-KW"/>
</dbReference>
<dbReference type="GO" id="GO:0032263">
    <property type="term" value="P:GMP salvage"/>
    <property type="evidence" value="ECO:0007669"/>
    <property type="project" value="UniProtKB-UniPathway"/>
</dbReference>
<dbReference type="GO" id="GO:0006178">
    <property type="term" value="P:guanine salvage"/>
    <property type="evidence" value="ECO:0007669"/>
    <property type="project" value="TreeGrafter"/>
</dbReference>
<dbReference type="GO" id="GO:0046100">
    <property type="term" value="P:hypoxanthine metabolic process"/>
    <property type="evidence" value="ECO:0007669"/>
    <property type="project" value="TreeGrafter"/>
</dbReference>
<dbReference type="GO" id="GO:0032264">
    <property type="term" value="P:IMP salvage"/>
    <property type="evidence" value="ECO:0007669"/>
    <property type="project" value="UniProtKB-UniPathway"/>
</dbReference>
<dbReference type="GO" id="GO:0006166">
    <property type="term" value="P:purine ribonucleoside salvage"/>
    <property type="evidence" value="ECO:0007669"/>
    <property type="project" value="UniProtKB-KW"/>
</dbReference>
<dbReference type="CDD" id="cd06223">
    <property type="entry name" value="PRTases_typeI"/>
    <property type="match status" value="1"/>
</dbReference>
<dbReference type="FunFam" id="3.40.50.2020:FF:000006">
    <property type="entry name" value="Hypoxanthine phosphoribosyltransferase"/>
    <property type="match status" value="1"/>
</dbReference>
<dbReference type="Gene3D" id="3.40.50.2020">
    <property type="match status" value="1"/>
</dbReference>
<dbReference type="InterPro" id="IPR050408">
    <property type="entry name" value="HGPRT"/>
</dbReference>
<dbReference type="InterPro" id="IPR005904">
    <property type="entry name" value="Hxn_phspho_trans"/>
</dbReference>
<dbReference type="InterPro" id="IPR000836">
    <property type="entry name" value="PRibTrfase_dom"/>
</dbReference>
<dbReference type="InterPro" id="IPR029057">
    <property type="entry name" value="PRTase-like"/>
</dbReference>
<dbReference type="NCBIfam" id="TIGR01203">
    <property type="entry name" value="HGPRTase"/>
    <property type="match status" value="1"/>
</dbReference>
<dbReference type="PANTHER" id="PTHR43340:SF1">
    <property type="entry name" value="HYPOXANTHINE PHOSPHORIBOSYLTRANSFERASE"/>
    <property type="match status" value="1"/>
</dbReference>
<dbReference type="PANTHER" id="PTHR43340">
    <property type="entry name" value="HYPOXANTHINE-GUANINE PHOSPHORIBOSYLTRANSFERASE"/>
    <property type="match status" value="1"/>
</dbReference>
<dbReference type="Pfam" id="PF00156">
    <property type="entry name" value="Pribosyltran"/>
    <property type="match status" value="1"/>
</dbReference>
<dbReference type="SUPFAM" id="SSF53271">
    <property type="entry name" value="PRTase-like"/>
    <property type="match status" value="1"/>
</dbReference>